<name>YBEY_CUPNH</name>
<protein>
    <recommendedName>
        <fullName evidence="1">Endoribonuclease YbeY</fullName>
        <ecNumber evidence="1">3.1.-.-</ecNumber>
    </recommendedName>
</protein>
<gene>
    <name evidence="1" type="primary">ybeY</name>
    <name type="ordered locus">H16_A0526</name>
</gene>
<sequence>MVALLAEHTDTNQQAGLLVRPDNHDSLSVAVTATPVVTTTGTPATPPGLELEIQNGDGVGKRAGLPPRRKIETWVKSALYADAALTIRFVDEEEGRTLNRTYRGKDYATNVLTFAYAENEEDPVTGDIVLCCPVVETEAREQRKPLEAHYAHLIVHGVLHAQGYEHEEDAEAEEMEAIETETLQALGYADPYQGDRTV</sequence>
<proteinExistence type="inferred from homology"/>
<feature type="chain" id="PRO_0000284284" description="Endoribonuclease YbeY">
    <location>
        <begin position="1"/>
        <end position="198"/>
    </location>
</feature>
<feature type="binding site" evidence="1">
    <location>
        <position position="156"/>
    </location>
    <ligand>
        <name>Zn(2+)</name>
        <dbReference type="ChEBI" id="CHEBI:29105"/>
        <note>catalytic</note>
    </ligand>
</feature>
<feature type="binding site" evidence="1">
    <location>
        <position position="160"/>
    </location>
    <ligand>
        <name>Zn(2+)</name>
        <dbReference type="ChEBI" id="CHEBI:29105"/>
        <note>catalytic</note>
    </ligand>
</feature>
<feature type="binding site" evidence="1">
    <location>
        <position position="166"/>
    </location>
    <ligand>
        <name>Zn(2+)</name>
        <dbReference type="ChEBI" id="CHEBI:29105"/>
        <note>catalytic</note>
    </ligand>
</feature>
<keyword id="KW-0963">Cytoplasm</keyword>
<keyword id="KW-0255">Endonuclease</keyword>
<keyword id="KW-0378">Hydrolase</keyword>
<keyword id="KW-0479">Metal-binding</keyword>
<keyword id="KW-0540">Nuclease</keyword>
<keyword id="KW-1185">Reference proteome</keyword>
<keyword id="KW-0690">Ribosome biogenesis</keyword>
<keyword id="KW-0698">rRNA processing</keyword>
<keyword id="KW-0862">Zinc</keyword>
<dbReference type="EC" id="3.1.-.-" evidence="1"/>
<dbReference type="EMBL" id="AM260479">
    <property type="protein sequence ID" value="CAJ91676.1"/>
    <property type="status" value="ALT_INIT"/>
    <property type="molecule type" value="Genomic_DNA"/>
</dbReference>
<dbReference type="RefSeq" id="WP_011614557.1">
    <property type="nucleotide sequence ID" value="NZ_CP039287.1"/>
</dbReference>
<dbReference type="SMR" id="Q0KE95"/>
<dbReference type="STRING" id="381666.H16_A0526"/>
<dbReference type="KEGG" id="reh:H16_A0526"/>
<dbReference type="eggNOG" id="COG0319">
    <property type="taxonomic scope" value="Bacteria"/>
</dbReference>
<dbReference type="HOGENOM" id="CLU_1118710_0_0_4"/>
<dbReference type="OrthoDB" id="9807740at2"/>
<dbReference type="Proteomes" id="UP000008210">
    <property type="component" value="Chromosome 1"/>
</dbReference>
<dbReference type="GO" id="GO:0005737">
    <property type="term" value="C:cytoplasm"/>
    <property type="evidence" value="ECO:0007669"/>
    <property type="project" value="UniProtKB-SubCell"/>
</dbReference>
<dbReference type="GO" id="GO:0004222">
    <property type="term" value="F:metalloendopeptidase activity"/>
    <property type="evidence" value="ECO:0007669"/>
    <property type="project" value="InterPro"/>
</dbReference>
<dbReference type="GO" id="GO:0004521">
    <property type="term" value="F:RNA endonuclease activity"/>
    <property type="evidence" value="ECO:0007669"/>
    <property type="project" value="UniProtKB-UniRule"/>
</dbReference>
<dbReference type="GO" id="GO:0008270">
    <property type="term" value="F:zinc ion binding"/>
    <property type="evidence" value="ECO:0007669"/>
    <property type="project" value="UniProtKB-UniRule"/>
</dbReference>
<dbReference type="GO" id="GO:0006364">
    <property type="term" value="P:rRNA processing"/>
    <property type="evidence" value="ECO:0007669"/>
    <property type="project" value="UniProtKB-UniRule"/>
</dbReference>
<dbReference type="Gene3D" id="3.40.390.30">
    <property type="entry name" value="Metalloproteases ('zincins'), catalytic domain"/>
    <property type="match status" value="1"/>
</dbReference>
<dbReference type="HAMAP" id="MF_00009">
    <property type="entry name" value="Endoribonucl_YbeY"/>
    <property type="match status" value="1"/>
</dbReference>
<dbReference type="InterPro" id="IPR023091">
    <property type="entry name" value="MetalPrtase_cat_dom_sf_prd"/>
</dbReference>
<dbReference type="InterPro" id="IPR002036">
    <property type="entry name" value="YbeY"/>
</dbReference>
<dbReference type="InterPro" id="IPR020549">
    <property type="entry name" value="YbeY_CS"/>
</dbReference>
<dbReference type="NCBIfam" id="NF010570">
    <property type="entry name" value="PRK13963.1"/>
    <property type="match status" value="1"/>
</dbReference>
<dbReference type="NCBIfam" id="TIGR00043">
    <property type="entry name" value="rRNA maturation RNase YbeY"/>
    <property type="match status" value="1"/>
</dbReference>
<dbReference type="PANTHER" id="PTHR46986">
    <property type="entry name" value="ENDORIBONUCLEASE YBEY, CHLOROPLASTIC"/>
    <property type="match status" value="1"/>
</dbReference>
<dbReference type="PANTHER" id="PTHR46986:SF1">
    <property type="entry name" value="ENDORIBONUCLEASE YBEY, CHLOROPLASTIC"/>
    <property type="match status" value="1"/>
</dbReference>
<dbReference type="Pfam" id="PF02130">
    <property type="entry name" value="YbeY"/>
    <property type="match status" value="1"/>
</dbReference>
<dbReference type="SUPFAM" id="SSF55486">
    <property type="entry name" value="Metalloproteases ('zincins'), catalytic domain"/>
    <property type="match status" value="1"/>
</dbReference>
<dbReference type="PROSITE" id="PS01306">
    <property type="entry name" value="UPF0054"/>
    <property type="match status" value="1"/>
</dbReference>
<accession>Q0KE95</accession>
<organism>
    <name type="scientific">Cupriavidus necator (strain ATCC 17699 / DSM 428 / KCTC 22496 / NCIMB 10442 / H16 / Stanier 337)</name>
    <name type="common">Ralstonia eutropha</name>
    <dbReference type="NCBI Taxonomy" id="381666"/>
    <lineage>
        <taxon>Bacteria</taxon>
        <taxon>Pseudomonadati</taxon>
        <taxon>Pseudomonadota</taxon>
        <taxon>Betaproteobacteria</taxon>
        <taxon>Burkholderiales</taxon>
        <taxon>Burkholderiaceae</taxon>
        <taxon>Cupriavidus</taxon>
    </lineage>
</organism>
<comment type="function">
    <text evidence="1">Single strand-specific metallo-endoribonuclease involved in late-stage 70S ribosome quality control and in maturation of the 3' terminus of the 16S rRNA.</text>
</comment>
<comment type="cofactor">
    <cofactor evidence="1">
        <name>Zn(2+)</name>
        <dbReference type="ChEBI" id="CHEBI:29105"/>
    </cofactor>
    <text evidence="1">Binds 1 zinc ion.</text>
</comment>
<comment type="subcellular location">
    <subcellularLocation>
        <location evidence="1">Cytoplasm</location>
    </subcellularLocation>
</comment>
<comment type="similarity">
    <text evidence="1">Belongs to the endoribonuclease YbeY family.</text>
</comment>
<comment type="sequence caution" evidence="2">
    <conflict type="erroneous initiation">
        <sequence resource="EMBL-CDS" id="CAJ91676"/>
    </conflict>
</comment>
<evidence type="ECO:0000255" key="1">
    <source>
        <dbReference type="HAMAP-Rule" id="MF_00009"/>
    </source>
</evidence>
<evidence type="ECO:0000305" key="2"/>
<reference key="1">
    <citation type="journal article" date="2006" name="Nat. Biotechnol.">
        <title>Genome sequence of the bioplastic-producing 'Knallgas' bacterium Ralstonia eutropha H16.</title>
        <authorList>
            <person name="Pohlmann A."/>
            <person name="Fricke W.F."/>
            <person name="Reinecke F."/>
            <person name="Kusian B."/>
            <person name="Liesegang H."/>
            <person name="Cramm R."/>
            <person name="Eitinger T."/>
            <person name="Ewering C."/>
            <person name="Poetter M."/>
            <person name="Schwartz E."/>
            <person name="Strittmatter A."/>
            <person name="Voss I."/>
            <person name="Gottschalk G."/>
            <person name="Steinbuechel A."/>
            <person name="Friedrich B."/>
            <person name="Bowien B."/>
        </authorList>
    </citation>
    <scope>NUCLEOTIDE SEQUENCE [LARGE SCALE GENOMIC DNA]</scope>
    <source>
        <strain>ATCC 17699 / DSM 428 / KCTC 22496 / NCIMB 10442 / H16 / Stanier 337</strain>
    </source>
</reference>